<protein>
    <recommendedName>
        <fullName evidence="1">S-ribosylhomocysteine lyase</fullName>
        <ecNumber evidence="1">4.4.1.21</ecNumber>
    </recommendedName>
    <alternativeName>
        <fullName evidence="1">AI-2 synthesis protein</fullName>
    </alternativeName>
    <alternativeName>
        <fullName evidence="1">Autoinducer-2 production protein LuxS</fullName>
    </alternativeName>
</protein>
<proteinExistence type="inferred from homology"/>
<comment type="function">
    <text evidence="1">Involved in the synthesis of autoinducer 2 (AI-2) which is secreted by bacteria and is used to communicate both the cell density and the metabolic potential of the environment. The regulation of gene expression in response to changes in cell density is called quorum sensing. Catalyzes the transformation of S-ribosylhomocysteine (RHC) to homocysteine (HC) and 4,5-dihydroxy-2,3-pentadione (DPD).</text>
</comment>
<comment type="catalytic activity">
    <reaction evidence="1">
        <text>S-(5-deoxy-D-ribos-5-yl)-L-homocysteine = (S)-4,5-dihydroxypentane-2,3-dione + L-homocysteine</text>
        <dbReference type="Rhea" id="RHEA:17753"/>
        <dbReference type="ChEBI" id="CHEBI:29484"/>
        <dbReference type="ChEBI" id="CHEBI:58195"/>
        <dbReference type="ChEBI" id="CHEBI:58199"/>
        <dbReference type="EC" id="4.4.1.21"/>
    </reaction>
</comment>
<comment type="cofactor">
    <cofactor evidence="1">
        <name>Fe cation</name>
        <dbReference type="ChEBI" id="CHEBI:24875"/>
    </cofactor>
    <text evidence="1">Binds 1 Fe cation per subunit.</text>
</comment>
<comment type="subunit">
    <text evidence="1">Homodimer.</text>
</comment>
<comment type="similarity">
    <text evidence="1">Belongs to the LuxS family.</text>
</comment>
<accession>A8FMQ4</accession>
<name>LUXS_CAMJ8</name>
<organism>
    <name type="scientific">Campylobacter jejuni subsp. jejuni serotype O:6 (strain 81116 / NCTC 11828)</name>
    <dbReference type="NCBI Taxonomy" id="407148"/>
    <lineage>
        <taxon>Bacteria</taxon>
        <taxon>Pseudomonadati</taxon>
        <taxon>Campylobacterota</taxon>
        <taxon>Epsilonproteobacteria</taxon>
        <taxon>Campylobacterales</taxon>
        <taxon>Campylobacteraceae</taxon>
        <taxon>Campylobacter</taxon>
    </lineage>
</organism>
<evidence type="ECO:0000255" key="1">
    <source>
        <dbReference type="HAMAP-Rule" id="MF_00091"/>
    </source>
</evidence>
<dbReference type="EC" id="4.4.1.21" evidence="1"/>
<dbReference type="EMBL" id="CP000814">
    <property type="protein sequence ID" value="ABV52741.1"/>
    <property type="molecule type" value="Genomic_DNA"/>
</dbReference>
<dbReference type="RefSeq" id="WP_002860433.1">
    <property type="nucleotide sequence ID" value="NC_009839.1"/>
</dbReference>
<dbReference type="SMR" id="A8FMQ4"/>
<dbReference type="KEGG" id="cju:C8J_1142"/>
<dbReference type="HOGENOM" id="CLU_107531_2_0_7"/>
<dbReference type="GO" id="GO:0005506">
    <property type="term" value="F:iron ion binding"/>
    <property type="evidence" value="ECO:0007669"/>
    <property type="project" value="InterPro"/>
</dbReference>
<dbReference type="GO" id="GO:0043768">
    <property type="term" value="F:S-ribosylhomocysteine lyase activity"/>
    <property type="evidence" value="ECO:0007669"/>
    <property type="project" value="UniProtKB-UniRule"/>
</dbReference>
<dbReference type="GO" id="GO:0009372">
    <property type="term" value="P:quorum sensing"/>
    <property type="evidence" value="ECO:0007669"/>
    <property type="project" value="UniProtKB-UniRule"/>
</dbReference>
<dbReference type="Gene3D" id="3.30.1360.80">
    <property type="entry name" value="S-ribosylhomocysteinase (LuxS)"/>
    <property type="match status" value="1"/>
</dbReference>
<dbReference type="HAMAP" id="MF_00091">
    <property type="entry name" value="LuxS"/>
    <property type="match status" value="1"/>
</dbReference>
<dbReference type="InterPro" id="IPR037005">
    <property type="entry name" value="LuxS_sf"/>
</dbReference>
<dbReference type="InterPro" id="IPR011249">
    <property type="entry name" value="Metalloenz_LuxS/M16"/>
</dbReference>
<dbReference type="InterPro" id="IPR003815">
    <property type="entry name" value="S-ribosylhomocysteinase"/>
</dbReference>
<dbReference type="NCBIfam" id="NF002602">
    <property type="entry name" value="PRK02260.1-2"/>
    <property type="match status" value="1"/>
</dbReference>
<dbReference type="PANTHER" id="PTHR35799">
    <property type="entry name" value="S-RIBOSYLHOMOCYSTEINE LYASE"/>
    <property type="match status" value="1"/>
</dbReference>
<dbReference type="PANTHER" id="PTHR35799:SF1">
    <property type="entry name" value="S-RIBOSYLHOMOCYSTEINE LYASE"/>
    <property type="match status" value="1"/>
</dbReference>
<dbReference type="Pfam" id="PF02664">
    <property type="entry name" value="LuxS"/>
    <property type="match status" value="1"/>
</dbReference>
<dbReference type="PIRSF" id="PIRSF006160">
    <property type="entry name" value="AI2"/>
    <property type="match status" value="1"/>
</dbReference>
<dbReference type="PRINTS" id="PR01487">
    <property type="entry name" value="LUXSPROTEIN"/>
</dbReference>
<dbReference type="SUPFAM" id="SSF63411">
    <property type="entry name" value="LuxS/MPP-like metallohydrolase"/>
    <property type="match status" value="1"/>
</dbReference>
<keyword id="KW-0071">Autoinducer synthesis</keyword>
<keyword id="KW-0408">Iron</keyword>
<keyword id="KW-0456">Lyase</keyword>
<keyword id="KW-0479">Metal-binding</keyword>
<keyword id="KW-0673">Quorum sensing</keyword>
<gene>
    <name evidence="1" type="primary">luxS</name>
    <name type="ordered locus">C8J_1142</name>
</gene>
<sequence>MPLLDSFKVDHTKMPAPAVRLAKVMKTPKGDDISVFDLRFCIPNKDIMSEKGTHTLEHLFAGFMRDHLNSNSVEIIDISPMGCRTGFYMSLIGTPDEKSVAKAWEEAMKDVLSVSDQSKIPELNIYQCGTCAMHSLDEAKQIAQKVLNLGISIMNNKELKLENA</sequence>
<reference key="1">
    <citation type="journal article" date="2007" name="J. Bacteriol.">
        <title>The complete genome sequence of Campylobacter jejuni strain 81116 (NCTC11828).</title>
        <authorList>
            <person name="Pearson B.M."/>
            <person name="Gaskin D.J.H."/>
            <person name="Segers R.P.A.M."/>
            <person name="Wells J.M."/>
            <person name="Nuijten P.J.M."/>
            <person name="van Vliet A.H.M."/>
        </authorList>
    </citation>
    <scope>NUCLEOTIDE SEQUENCE [LARGE SCALE GENOMIC DNA]</scope>
    <source>
        <strain>81116 / NCTC 11828</strain>
    </source>
</reference>
<feature type="chain" id="PRO_1000071258" description="S-ribosylhomocysteine lyase">
    <location>
        <begin position="1"/>
        <end position="164"/>
    </location>
</feature>
<feature type="binding site" evidence="1">
    <location>
        <position position="54"/>
    </location>
    <ligand>
        <name>Fe cation</name>
        <dbReference type="ChEBI" id="CHEBI:24875"/>
    </ligand>
</feature>
<feature type="binding site" evidence="1">
    <location>
        <position position="58"/>
    </location>
    <ligand>
        <name>Fe cation</name>
        <dbReference type="ChEBI" id="CHEBI:24875"/>
    </ligand>
</feature>
<feature type="binding site" evidence="1">
    <location>
        <position position="128"/>
    </location>
    <ligand>
        <name>Fe cation</name>
        <dbReference type="ChEBI" id="CHEBI:24875"/>
    </ligand>
</feature>